<gene>
    <name evidence="1" type="primary">menD</name>
    <name type="ordered locus">VIBHAR_01429</name>
</gene>
<sequence>MSVDQAVLNRIWSETILTELNRFGVNHVCIAPGSRSTPLTVEAADNPNFTIHTHFDERGLGFMALGLAKASKEPVALIVTSGTAVANLLPAIAEAKLTGEKLVVLTADRPVELVGCGANQAINQLGIFAEHVSDSLNLPSPTLSTPLNWLLTSVDEVMFTQRLRGSAVHINCAFPEPLYSNTDKSTYQGYLDTVAGWRDSKVTYCQRFNPKTSSAIPSCGDNKGLVVIGSLPLIQAQAARTFAEQMGWPVLADPQSGVSSDWAHFDLWLQNPRMASQLDDCDLIVQFGSRIISKRFNHWLEKHVSRNQQGGDTQYWFVSPRLDRDNQSHLPQWHWAEQPSAWVERTSGFSSEHAGWADKLAADIKQVTQHAKGLFISDPKSELSEIALAIDVAERAQGVDLFVGNSLFVRLIDMFGKLDNTEVFTNRGASGIDGLFATASGVQRARNNPMLMFIGDTSALYGLNSLALFTHSELPSVLVIANNDGGAIFDLLPVPQEHRESFYQMPHGYEFEHAAKQFGLQYRKPSSLAEYQSLVSEHFASGQGALVVEVQTPSNQAVEHLKSFDKNLHALF</sequence>
<accession>A7MZS0</accession>
<proteinExistence type="inferred from homology"/>
<protein>
    <recommendedName>
        <fullName evidence="1">2-succinyl-5-enolpyruvyl-6-hydroxy-3-cyclohexene-1-carboxylate synthase</fullName>
        <shortName evidence="1">SEPHCHC synthase</shortName>
        <ecNumber evidence="1">2.2.1.9</ecNumber>
    </recommendedName>
    <alternativeName>
        <fullName evidence="1">Menaquinone biosynthesis protein MenD</fullName>
    </alternativeName>
</protein>
<keyword id="KW-0460">Magnesium</keyword>
<keyword id="KW-0464">Manganese</keyword>
<keyword id="KW-0474">Menaquinone biosynthesis</keyword>
<keyword id="KW-0479">Metal-binding</keyword>
<keyword id="KW-0786">Thiamine pyrophosphate</keyword>
<keyword id="KW-0808">Transferase</keyword>
<feature type="chain" id="PRO_0000341885" description="2-succinyl-5-enolpyruvyl-6-hydroxy-3-cyclohexene-1-carboxylate synthase">
    <location>
        <begin position="1"/>
        <end position="572"/>
    </location>
</feature>
<organism>
    <name type="scientific">Vibrio campbellii (strain ATCC BAA-1116)</name>
    <dbReference type="NCBI Taxonomy" id="2902295"/>
    <lineage>
        <taxon>Bacteria</taxon>
        <taxon>Pseudomonadati</taxon>
        <taxon>Pseudomonadota</taxon>
        <taxon>Gammaproteobacteria</taxon>
        <taxon>Vibrionales</taxon>
        <taxon>Vibrionaceae</taxon>
        <taxon>Vibrio</taxon>
    </lineage>
</organism>
<name>MEND_VIBC1</name>
<evidence type="ECO:0000255" key="1">
    <source>
        <dbReference type="HAMAP-Rule" id="MF_01659"/>
    </source>
</evidence>
<reference key="1">
    <citation type="submission" date="2007-08" db="EMBL/GenBank/DDBJ databases">
        <authorList>
            <consortium name="The Vibrio harveyi Genome Sequencing Project"/>
            <person name="Bassler B."/>
            <person name="Clifton S.W."/>
            <person name="Fulton L."/>
            <person name="Delehaunty K."/>
            <person name="Fronick C."/>
            <person name="Harrison M."/>
            <person name="Markivic C."/>
            <person name="Fulton R."/>
            <person name="Tin-Wollam A.-M."/>
            <person name="Shah N."/>
            <person name="Pepin K."/>
            <person name="Nash W."/>
            <person name="Thiruvilangam P."/>
            <person name="Bhonagiri V."/>
            <person name="Waters C."/>
            <person name="Tu K.C."/>
            <person name="Irgon J."/>
            <person name="Wilson R.K."/>
        </authorList>
    </citation>
    <scope>NUCLEOTIDE SEQUENCE [LARGE SCALE GENOMIC DNA]</scope>
    <source>
        <strain>ATCC BAA-1116 / BB120</strain>
    </source>
</reference>
<dbReference type="EC" id="2.2.1.9" evidence="1"/>
<dbReference type="EMBL" id="CP000789">
    <property type="protein sequence ID" value="ABU70404.1"/>
    <property type="molecule type" value="Genomic_DNA"/>
</dbReference>
<dbReference type="RefSeq" id="WP_012127319.1">
    <property type="nucleotide sequence ID" value="NC_022269.1"/>
</dbReference>
<dbReference type="SMR" id="A7MZS0"/>
<dbReference type="KEGG" id="vha:VIBHAR_01429"/>
<dbReference type="PATRIC" id="fig|338187.25.peg.1224"/>
<dbReference type="UniPathway" id="UPA00079"/>
<dbReference type="UniPathway" id="UPA01057">
    <property type="reaction ID" value="UER00164"/>
</dbReference>
<dbReference type="Proteomes" id="UP000008152">
    <property type="component" value="Chromosome I"/>
</dbReference>
<dbReference type="GO" id="GO:0070204">
    <property type="term" value="F:2-succinyl-5-enolpyruvyl-6-hydroxy-3-cyclohexene-1-carboxylic-acid synthase activity"/>
    <property type="evidence" value="ECO:0007669"/>
    <property type="project" value="UniProtKB-UniRule"/>
</dbReference>
<dbReference type="GO" id="GO:0000287">
    <property type="term" value="F:magnesium ion binding"/>
    <property type="evidence" value="ECO:0007669"/>
    <property type="project" value="UniProtKB-UniRule"/>
</dbReference>
<dbReference type="GO" id="GO:0030145">
    <property type="term" value="F:manganese ion binding"/>
    <property type="evidence" value="ECO:0007669"/>
    <property type="project" value="UniProtKB-UniRule"/>
</dbReference>
<dbReference type="GO" id="GO:0030976">
    <property type="term" value="F:thiamine pyrophosphate binding"/>
    <property type="evidence" value="ECO:0007669"/>
    <property type="project" value="UniProtKB-UniRule"/>
</dbReference>
<dbReference type="GO" id="GO:0009234">
    <property type="term" value="P:menaquinone biosynthetic process"/>
    <property type="evidence" value="ECO:0007669"/>
    <property type="project" value="UniProtKB-UniRule"/>
</dbReference>
<dbReference type="CDD" id="cd07037">
    <property type="entry name" value="TPP_PYR_MenD"/>
    <property type="match status" value="1"/>
</dbReference>
<dbReference type="CDD" id="cd02009">
    <property type="entry name" value="TPP_SHCHC_synthase"/>
    <property type="match status" value="1"/>
</dbReference>
<dbReference type="Gene3D" id="3.40.50.970">
    <property type="match status" value="2"/>
</dbReference>
<dbReference type="Gene3D" id="3.40.50.1220">
    <property type="entry name" value="TPP-binding domain"/>
    <property type="match status" value="1"/>
</dbReference>
<dbReference type="HAMAP" id="MF_01659">
    <property type="entry name" value="MenD"/>
    <property type="match status" value="1"/>
</dbReference>
<dbReference type="InterPro" id="IPR004433">
    <property type="entry name" value="MenaQ_synth_MenD"/>
</dbReference>
<dbReference type="InterPro" id="IPR032264">
    <property type="entry name" value="MenD_middle"/>
</dbReference>
<dbReference type="InterPro" id="IPR029061">
    <property type="entry name" value="THDP-binding"/>
</dbReference>
<dbReference type="InterPro" id="IPR012001">
    <property type="entry name" value="Thiamin_PyroP_enz_TPP-bd_dom"/>
</dbReference>
<dbReference type="InterPro" id="IPR011766">
    <property type="entry name" value="TPP_enzyme_TPP-bd"/>
</dbReference>
<dbReference type="NCBIfam" id="TIGR00173">
    <property type="entry name" value="menD"/>
    <property type="match status" value="1"/>
</dbReference>
<dbReference type="PANTHER" id="PTHR42916">
    <property type="entry name" value="2-SUCCINYL-5-ENOLPYRUVYL-6-HYDROXY-3-CYCLOHEXENE-1-CARBOXYLATE SYNTHASE"/>
    <property type="match status" value="1"/>
</dbReference>
<dbReference type="PANTHER" id="PTHR42916:SF1">
    <property type="entry name" value="PROTEIN PHYLLO, CHLOROPLASTIC"/>
    <property type="match status" value="1"/>
</dbReference>
<dbReference type="Pfam" id="PF02775">
    <property type="entry name" value="TPP_enzyme_C"/>
    <property type="match status" value="1"/>
</dbReference>
<dbReference type="Pfam" id="PF16582">
    <property type="entry name" value="TPP_enzyme_M_2"/>
    <property type="match status" value="1"/>
</dbReference>
<dbReference type="Pfam" id="PF02776">
    <property type="entry name" value="TPP_enzyme_N"/>
    <property type="match status" value="1"/>
</dbReference>
<dbReference type="PIRSF" id="PIRSF004983">
    <property type="entry name" value="MenD"/>
    <property type="match status" value="1"/>
</dbReference>
<dbReference type="SUPFAM" id="SSF52518">
    <property type="entry name" value="Thiamin diphosphate-binding fold (THDP-binding)"/>
    <property type="match status" value="2"/>
</dbReference>
<comment type="function">
    <text evidence="1">Catalyzes the thiamine diphosphate-dependent decarboxylation of 2-oxoglutarate and the subsequent addition of the resulting succinic semialdehyde-thiamine pyrophosphate anion to isochorismate to yield 2-succinyl-5-enolpyruvyl-6-hydroxy-3-cyclohexene-1-carboxylate (SEPHCHC).</text>
</comment>
<comment type="catalytic activity">
    <reaction evidence="1">
        <text>isochorismate + 2-oxoglutarate + H(+) = 5-enolpyruvoyl-6-hydroxy-2-succinyl-cyclohex-3-ene-1-carboxylate + CO2</text>
        <dbReference type="Rhea" id="RHEA:25593"/>
        <dbReference type="ChEBI" id="CHEBI:15378"/>
        <dbReference type="ChEBI" id="CHEBI:16526"/>
        <dbReference type="ChEBI" id="CHEBI:16810"/>
        <dbReference type="ChEBI" id="CHEBI:29780"/>
        <dbReference type="ChEBI" id="CHEBI:58818"/>
        <dbReference type="EC" id="2.2.1.9"/>
    </reaction>
</comment>
<comment type="cofactor">
    <cofactor evidence="1">
        <name>Mg(2+)</name>
        <dbReference type="ChEBI" id="CHEBI:18420"/>
    </cofactor>
    <cofactor evidence="1">
        <name>Mn(2+)</name>
        <dbReference type="ChEBI" id="CHEBI:29035"/>
    </cofactor>
</comment>
<comment type="cofactor">
    <cofactor evidence="1">
        <name>thiamine diphosphate</name>
        <dbReference type="ChEBI" id="CHEBI:58937"/>
    </cofactor>
    <text evidence="1">Binds 1 thiamine pyrophosphate per subunit.</text>
</comment>
<comment type="pathway">
    <text evidence="1">Quinol/quinone metabolism; 1,4-dihydroxy-2-naphthoate biosynthesis; 1,4-dihydroxy-2-naphthoate from chorismate: step 2/7.</text>
</comment>
<comment type="pathway">
    <text evidence="1">Quinol/quinone metabolism; menaquinone biosynthesis.</text>
</comment>
<comment type="subunit">
    <text evidence="1">Homodimer.</text>
</comment>
<comment type="similarity">
    <text evidence="1">Belongs to the TPP enzyme family. MenD subfamily.</text>
</comment>